<protein>
    <recommendedName>
        <fullName>Cytochrome b</fullName>
    </recommendedName>
    <alternativeName>
        <fullName>Complex III subunit 3</fullName>
    </alternativeName>
    <alternativeName>
        <fullName>Complex III subunit III</fullName>
    </alternativeName>
    <alternativeName>
        <fullName>Cytochrome b-c1 complex subunit 3</fullName>
    </alternativeName>
    <alternativeName>
        <fullName>Ubiquinol-cytochrome-c reductase complex cytochrome b subunit</fullName>
    </alternativeName>
</protein>
<feature type="chain" id="PRO_0000254968" description="Cytochrome b">
    <location>
        <begin position="1"/>
        <end position="379"/>
    </location>
</feature>
<feature type="transmembrane region" description="Helical" evidence="2">
    <location>
        <begin position="33"/>
        <end position="53"/>
    </location>
</feature>
<feature type="transmembrane region" description="Helical" evidence="2">
    <location>
        <begin position="77"/>
        <end position="98"/>
    </location>
</feature>
<feature type="transmembrane region" description="Helical" evidence="2">
    <location>
        <begin position="113"/>
        <end position="133"/>
    </location>
</feature>
<feature type="transmembrane region" description="Helical" evidence="2">
    <location>
        <begin position="178"/>
        <end position="198"/>
    </location>
</feature>
<feature type="transmembrane region" description="Helical" evidence="2">
    <location>
        <begin position="226"/>
        <end position="246"/>
    </location>
</feature>
<feature type="transmembrane region" description="Helical" evidence="2">
    <location>
        <begin position="288"/>
        <end position="308"/>
    </location>
</feature>
<feature type="transmembrane region" description="Helical" evidence="2">
    <location>
        <begin position="320"/>
        <end position="340"/>
    </location>
</feature>
<feature type="transmembrane region" description="Helical" evidence="2">
    <location>
        <begin position="347"/>
        <end position="367"/>
    </location>
</feature>
<feature type="binding site" description="axial binding residue" evidence="2">
    <location>
        <position position="83"/>
    </location>
    <ligand>
        <name>heme b</name>
        <dbReference type="ChEBI" id="CHEBI:60344"/>
        <label>b562</label>
    </ligand>
    <ligandPart>
        <name>Fe</name>
        <dbReference type="ChEBI" id="CHEBI:18248"/>
    </ligandPart>
</feature>
<feature type="binding site" description="axial binding residue" evidence="2">
    <location>
        <position position="97"/>
    </location>
    <ligand>
        <name>heme b</name>
        <dbReference type="ChEBI" id="CHEBI:60344"/>
        <label>b566</label>
    </ligand>
    <ligandPart>
        <name>Fe</name>
        <dbReference type="ChEBI" id="CHEBI:18248"/>
    </ligandPart>
</feature>
<feature type="binding site" description="axial binding residue" evidence="2">
    <location>
        <position position="182"/>
    </location>
    <ligand>
        <name>heme b</name>
        <dbReference type="ChEBI" id="CHEBI:60344"/>
        <label>b562</label>
    </ligand>
    <ligandPart>
        <name>Fe</name>
        <dbReference type="ChEBI" id="CHEBI:18248"/>
    </ligandPart>
</feature>
<feature type="binding site" description="axial binding residue" evidence="2">
    <location>
        <position position="196"/>
    </location>
    <ligand>
        <name>heme b</name>
        <dbReference type="ChEBI" id="CHEBI:60344"/>
        <label>b566</label>
    </ligand>
    <ligandPart>
        <name>Fe</name>
        <dbReference type="ChEBI" id="CHEBI:18248"/>
    </ligandPart>
</feature>
<feature type="binding site" evidence="2">
    <location>
        <position position="201"/>
    </location>
    <ligand>
        <name>a ubiquinone</name>
        <dbReference type="ChEBI" id="CHEBI:16389"/>
    </ligand>
</feature>
<dbReference type="EMBL" id="AF147634">
    <property type="protein sequence ID" value="AAL14033.1"/>
    <property type="molecule type" value="Genomic_DNA"/>
</dbReference>
<dbReference type="SMR" id="Q94Y72"/>
<dbReference type="GO" id="GO:0005743">
    <property type="term" value="C:mitochondrial inner membrane"/>
    <property type="evidence" value="ECO:0007669"/>
    <property type="project" value="UniProtKB-SubCell"/>
</dbReference>
<dbReference type="GO" id="GO:0045275">
    <property type="term" value="C:respiratory chain complex III"/>
    <property type="evidence" value="ECO:0007669"/>
    <property type="project" value="InterPro"/>
</dbReference>
<dbReference type="GO" id="GO:0046872">
    <property type="term" value="F:metal ion binding"/>
    <property type="evidence" value="ECO:0007669"/>
    <property type="project" value="UniProtKB-KW"/>
</dbReference>
<dbReference type="GO" id="GO:0008121">
    <property type="term" value="F:ubiquinol-cytochrome-c reductase activity"/>
    <property type="evidence" value="ECO:0007669"/>
    <property type="project" value="InterPro"/>
</dbReference>
<dbReference type="GO" id="GO:0006122">
    <property type="term" value="P:mitochondrial electron transport, ubiquinol to cytochrome c"/>
    <property type="evidence" value="ECO:0007669"/>
    <property type="project" value="TreeGrafter"/>
</dbReference>
<dbReference type="CDD" id="cd00290">
    <property type="entry name" value="cytochrome_b_C"/>
    <property type="match status" value="1"/>
</dbReference>
<dbReference type="CDD" id="cd00284">
    <property type="entry name" value="Cytochrome_b_N"/>
    <property type="match status" value="1"/>
</dbReference>
<dbReference type="FunFam" id="1.20.810.10:FF:000002">
    <property type="entry name" value="Cytochrome b"/>
    <property type="match status" value="1"/>
</dbReference>
<dbReference type="Gene3D" id="1.20.810.10">
    <property type="entry name" value="Cytochrome Bc1 Complex, Chain C"/>
    <property type="match status" value="1"/>
</dbReference>
<dbReference type="InterPro" id="IPR005798">
    <property type="entry name" value="Cyt_b/b6_C"/>
</dbReference>
<dbReference type="InterPro" id="IPR036150">
    <property type="entry name" value="Cyt_b/b6_C_sf"/>
</dbReference>
<dbReference type="InterPro" id="IPR005797">
    <property type="entry name" value="Cyt_b/b6_N"/>
</dbReference>
<dbReference type="InterPro" id="IPR027387">
    <property type="entry name" value="Cytb/b6-like_sf"/>
</dbReference>
<dbReference type="InterPro" id="IPR030689">
    <property type="entry name" value="Cytochrome_b"/>
</dbReference>
<dbReference type="InterPro" id="IPR048260">
    <property type="entry name" value="Cytochrome_b_C_euk/bac"/>
</dbReference>
<dbReference type="InterPro" id="IPR048259">
    <property type="entry name" value="Cytochrome_b_N_euk/bac"/>
</dbReference>
<dbReference type="InterPro" id="IPR016174">
    <property type="entry name" value="Di-haem_cyt_TM"/>
</dbReference>
<dbReference type="PANTHER" id="PTHR19271">
    <property type="entry name" value="CYTOCHROME B"/>
    <property type="match status" value="1"/>
</dbReference>
<dbReference type="PANTHER" id="PTHR19271:SF16">
    <property type="entry name" value="CYTOCHROME B"/>
    <property type="match status" value="1"/>
</dbReference>
<dbReference type="Pfam" id="PF00032">
    <property type="entry name" value="Cytochrom_B_C"/>
    <property type="match status" value="1"/>
</dbReference>
<dbReference type="Pfam" id="PF00033">
    <property type="entry name" value="Cytochrome_B"/>
    <property type="match status" value="1"/>
</dbReference>
<dbReference type="PIRSF" id="PIRSF038885">
    <property type="entry name" value="COB"/>
    <property type="match status" value="1"/>
</dbReference>
<dbReference type="SUPFAM" id="SSF81648">
    <property type="entry name" value="a domain/subunit of cytochrome bc1 complex (Ubiquinol-cytochrome c reductase)"/>
    <property type="match status" value="1"/>
</dbReference>
<dbReference type="SUPFAM" id="SSF81342">
    <property type="entry name" value="Transmembrane di-heme cytochromes"/>
    <property type="match status" value="1"/>
</dbReference>
<dbReference type="PROSITE" id="PS51003">
    <property type="entry name" value="CYTB_CTER"/>
    <property type="match status" value="1"/>
</dbReference>
<dbReference type="PROSITE" id="PS51002">
    <property type="entry name" value="CYTB_NTER"/>
    <property type="match status" value="1"/>
</dbReference>
<sequence>MTNIRKTHPLMKIINHSFIDLPAPSNISAWWNFGSLLGICLIIQILTGLFLAMHYTSDTMTAFSSVTHICRDVNYGWLIRYMHANGASMFFICLFLHVGRGLYYGSYTYFETWNIGVILLLAVMATAFMGYVLPWGQMSFWGATVITNLLSAIPYIGTTLVEWIWGGFSVDKATLTRFFAFHFILPFIITALVMVHLLFLHETGSNNPSGLISDSDKIPFHPYYTIKDILGILLLILMLMILVLFSPDLLGDPDNYTPANPLNTPPHIKPEWYFLFAYAILRSIPNKLGGVLALVLSILILMLFPILHMSKQRSMMFRPLSQCMFWILVADLFTLTWIGGQPVEYPFIIIGQLASILYFTIILLILPTISLFENKLLKW</sequence>
<keyword id="KW-0249">Electron transport</keyword>
<keyword id="KW-0349">Heme</keyword>
<keyword id="KW-0408">Iron</keyword>
<keyword id="KW-0472">Membrane</keyword>
<keyword id="KW-0479">Metal-binding</keyword>
<keyword id="KW-0496">Mitochondrion</keyword>
<keyword id="KW-0999">Mitochondrion inner membrane</keyword>
<keyword id="KW-0679">Respiratory chain</keyword>
<keyword id="KW-0812">Transmembrane</keyword>
<keyword id="KW-1133">Transmembrane helix</keyword>
<keyword id="KW-0813">Transport</keyword>
<keyword id="KW-0830">Ubiquinone</keyword>
<proteinExistence type="inferred from homology"/>
<gene>
    <name type="primary">MT-CYB</name>
    <name type="synonym">COB</name>
    <name type="synonym">CYTB</name>
    <name type="synonym">MTCYB</name>
</gene>
<geneLocation type="mitochondrion"/>
<organism>
    <name type="scientific">Neotamias bulleri</name>
    <name type="common">Buller's chipmunk</name>
    <name type="synonym">Tamias bulleri</name>
    <dbReference type="NCBI Taxonomy" id="3370375"/>
    <lineage>
        <taxon>Eukaryota</taxon>
        <taxon>Metazoa</taxon>
        <taxon>Chordata</taxon>
        <taxon>Craniata</taxon>
        <taxon>Vertebrata</taxon>
        <taxon>Euteleostomi</taxon>
        <taxon>Mammalia</taxon>
        <taxon>Eutheria</taxon>
        <taxon>Euarchontoglires</taxon>
        <taxon>Glires</taxon>
        <taxon>Rodentia</taxon>
        <taxon>Sciuromorpha</taxon>
        <taxon>Sciuridae</taxon>
        <taxon>Xerinae</taxon>
        <taxon>Marmotini</taxon>
        <taxon>Neotamias</taxon>
    </lineage>
</organism>
<accession>Q94Y72</accession>
<comment type="function">
    <text evidence="2">Component of the ubiquinol-cytochrome c reductase complex (complex III or cytochrome b-c1 complex) that is part of the mitochondrial respiratory chain. The b-c1 complex mediates electron transfer from ubiquinol to cytochrome c. Contributes to the generation of a proton gradient across the mitochondrial membrane that is then used for ATP synthesis.</text>
</comment>
<comment type="cofactor">
    <cofactor evidence="2">
        <name>heme b</name>
        <dbReference type="ChEBI" id="CHEBI:60344"/>
    </cofactor>
    <text evidence="2">Binds 2 heme b groups non-covalently.</text>
</comment>
<comment type="subunit">
    <text evidence="2">The cytochrome bc1 complex contains 11 subunits: 3 respiratory subunits (MT-CYB, CYC1 and UQCRFS1), 2 core proteins (UQCRC1 and UQCRC2) and 6 low-molecular weight proteins (UQCRH/QCR6, UQCRB/QCR7, UQCRQ/QCR8, UQCR10/QCR9, UQCR11/QCR10 and a cleavage product of UQCRFS1). This cytochrome bc1 complex then forms a dimer.</text>
</comment>
<comment type="subcellular location">
    <subcellularLocation>
        <location evidence="2">Mitochondrion inner membrane</location>
        <topology evidence="2">Multi-pass membrane protein</topology>
    </subcellularLocation>
</comment>
<comment type="miscellaneous">
    <text evidence="1">Heme 1 (or BL or b562) is low-potential and absorbs at about 562 nm, and heme 2 (or BH or b566) is high-potential and absorbs at about 566 nm.</text>
</comment>
<comment type="similarity">
    <text evidence="3 4">Belongs to the cytochrome b family.</text>
</comment>
<comment type="caution">
    <text evidence="2">The full-length protein contains only eight transmembrane helices, not nine as predicted by bioinformatics tools.</text>
</comment>
<evidence type="ECO:0000250" key="1"/>
<evidence type="ECO:0000250" key="2">
    <source>
        <dbReference type="UniProtKB" id="P00157"/>
    </source>
</evidence>
<evidence type="ECO:0000255" key="3">
    <source>
        <dbReference type="PROSITE-ProRule" id="PRU00967"/>
    </source>
</evidence>
<evidence type="ECO:0000255" key="4">
    <source>
        <dbReference type="PROSITE-ProRule" id="PRU00968"/>
    </source>
</evidence>
<reference key="1">
    <citation type="journal article" date="2001" name="Mol. Phylogenet. Evol.">
        <title>Molecular phylogeny of the chipmunks inferred from mitochondrial cytochrome b and cytochrome oxidase II gene sequences.</title>
        <authorList>
            <person name="Piaggio A.J."/>
            <person name="Spicer G.S."/>
        </authorList>
    </citation>
    <scope>NUCLEOTIDE SEQUENCE [GENOMIC DNA]</scope>
</reference>
<name>CYB_NEOBL</name>